<gene>
    <name evidence="2" type="primary">psaC</name>
    <name type="ordered locus">P9515_17951</name>
</gene>
<dbReference type="EC" id="1.97.1.12" evidence="2"/>
<dbReference type="EMBL" id="CP000552">
    <property type="protein sequence ID" value="ABM73002.1"/>
    <property type="molecule type" value="Genomic_DNA"/>
</dbReference>
<dbReference type="RefSeq" id="WP_007099573.1">
    <property type="nucleotide sequence ID" value="NC_008817.1"/>
</dbReference>
<dbReference type="SMR" id="A2BYZ1"/>
<dbReference type="STRING" id="167542.P9515_17951"/>
<dbReference type="GeneID" id="60200697"/>
<dbReference type="KEGG" id="pmc:P9515_17951"/>
<dbReference type="eggNOG" id="COG1143">
    <property type="taxonomic scope" value="Bacteria"/>
</dbReference>
<dbReference type="HOGENOM" id="CLU_139698_8_0_3"/>
<dbReference type="OrthoDB" id="9804603at2"/>
<dbReference type="Proteomes" id="UP000001589">
    <property type="component" value="Chromosome"/>
</dbReference>
<dbReference type="GO" id="GO:0009522">
    <property type="term" value="C:photosystem I"/>
    <property type="evidence" value="ECO:0007669"/>
    <property type="project" value="UniProtKB-KW"/>
</dbReference>
<dbReference type="GO" id="GO:0031676">
    <property type="term" value="C:plasma membrane-derived thylakoid membrane"/>
    <property type="evidence" value="ECO:0007669"/>
    <property type="project" value="UniProtKB-SubCell"/>
</dbReference>
<dbReference type="GO" id="GO:0051539">
    <property type="term" value="F:4 iron, 4 sulfur cluster binding"/>
    <property type="evidence" value="ECO:0007669"/>
    <property type="project" value="UniProtKB-KW"/>
</dbReference>
<dbReference type="GO" id="GO:0009055">
    <property type="term" value="F:electron transfer activity"/>
    <property type="evidence" value="ECO:0007669"/>
    <property type="project" value="UniProtKB-UniRule"/>
</dbReference>
<dbReference type="GO" id="GO:0046872">
    <property type="term" value="F:metal ion binding"/>
    <property type="evidence" value="ECO:0007669"/>
    <property type="project" value="UniProtKB-KW"/>
</dbReference>
<dbReference type="GO" id="GO:0016491">
    <property type="term" value="F:oxidoreductase activity"/>
    <property type="evidence" value="ECO:0007669"/>
    <property type="project" value="UniProtKB-KW"/>
</dbReference>
<dbReference type="GO" id="GO:0009773">
    <property type="term" value="P:photosynthetic electron transport in photosystem I"/>
    <property type="evidence" value="ECO:0007669"/>
    <property type="project" value="InterPro"/>
</dbReference>
<dbReference type="FunFam" id="3.30.70.20:FF:000001">
    <property type="entry name" value="Photosystem I iron-sulfur center"/>
    <property type="match status" value="1"/>
</dbReference>
<dbReference type="Gene3D" id="3.30.70.20">
    <property type="match status" value="1"/>
</dbReference>
<dbReference type="HAMAP" id="MF_01303">
    <property type="entry name" value="PSI_PsaC"/>
    <property type="match status" value="1"/>
</dbReference>
<dbReference type="InterPro" id="IPR017896">
    <property type="entry name" value="4Fe4S_Fe-S-bd"/>
</dbReference>
<dbReference type="InterPro" id="IPR017900">
    <property type="entry name" value="4Fe4S_Fe_S_CS"/>
</dbReference>
<dbReference type="InterPro" id="IPR050157">
    <property type="entry name" value="PSI_iron-sulfur_center"/>
</dbReference>
<dbReference type="InterPro" id="IPR017491">
    <property type="entry name" value="PSI_PsaC"/>
</dbReference>
<dbReference type="NCBIfam" id="TIGR03048">
    <property type="entry name" value="PS_I_psaC"/>
    <property type="match status" value="1"/>
</dbReference>
<dbReference type="PANTHER" id="PTHR24960:SF79">
    <property type="entry name" value="PHOTOSYSTEM I IRON-SULFUR CENTER"/>
    <property type="match status" value="1"/>
</dbReference>
<dbReference type="PANTHER" id="PTHR24960">
    <property type="entry name" value="PHOTOSYSTEM I IRON-SULFUR CENTER-RELATED"/>
    <property type="match status" value="1"/>
</dbReference>
<dbReference type="Pfam" id="PF12838">
    <property type="entry name" value="Fer4_7"/>
    <property type="match status" value="1"/>
</dbReference>
<dbReference type="SUPFAM" id="SSF54862">
    <property type="entry name" value="4Fe-4S ferredoxins"/>
    <property type="match status" value="1"/>
</dbReference>
<dbReference type="PROSITE" id="PS00198">
    <property type="entry name" value="4FE4S_FER_1"/>
    <property type="match status" value="2"/>
</dbReference>
<dbReference type="PROSITE" id="PS51379">
    <property type="entry name" value="4FE4S_FER_2"/>
    <property type="match status" value="2"/>
</dbReference>
<proteinExistence type="inferred from homology"/>
<name>PSAC_PROM5</name>
<protein>
    <recommendedName>
        <fullName evidence="2">Photosystem I iron-sulfur center</fullName>
        <ecNumber evidence="2">1.97.1.12</ecNumber>
    </recommendedName>
    <alternativeName>
        <fullName evidence="2">9 kDa polypeptide</fullName>
    </alternativeName>
    <alternativeName>
        <fullName evidence="2">PSI-C</fullName>
    </alternativeName>
    <alternativeName>
        <fullName evidence="2">Photosystem I subunit VII</fullName>
    </alternativeName>
    <alternativeName>
        <fullName evidence="2">PsaC</fullName>
    </alternativeName>
</protein>
<organism>
    <name type="scientific">Prochlorococcus marinus (strain MIT 9515)</name>
    <dbReference type="NCBI Taxonomy" id="167542"/>
    <lineage>
        <taxon>Bacteria</taxon>
        <taxon>Bacillati</taxon>
        <taxon>Cyanobacteriota</taxon>
        <taxon>Cyanophyceae</taxon>
        <taxon>Synechococcales</taxon>
        <taxon>Prochlorococcaceae</taxon>
        <taxon>Prochlorococcus</taxon>
    </lineage>
</organism>
<accession>A2BYZ1</accession>
<evidence type="ECO:0000250" key="1"/>
<evidence type="ECO:0000255" key="2">
    <source>
        <dbReference type="HAMAP-Rule" id="MF_01303"/>
    </source>
</evidence>
<keyword id="KW-0004">4Fe-4S</keyword>
<keyword id="KW-0249">Electron transport</keyword>
<keyword id="KW-0408">Iron</keyword>
<keyword id="KW-0411">Iron-sulfur</keyword>
<keyword id="KW-0472">Membrane</keyword>
<keyword id="KW-0479">Metal-binding</keyword>
<keyword id="KW-0560">Oxidoreductase</keyword>
<keyword id="KW-0602">Photosynthesis</keyword>
<keyword id="KW-0603">Photosystem I</keyword>
<keyword id="KW-0677">Repeat</keyword>
<keyword id="KW-0793">Thylakoid</keyword>
<keyword id="KW-0813">Transport</keyword>
<reference key="1">
    <citation type="journal article" date="2007" name="PLoS Genet.">
        <title>Patterns and implications of gene gain and loss in the evolution of Prochlorococcus.</title>
        <authorList>
            <person name="Kettler G.C."/>
            <person name="Martiny A.C."/>
            <person name="Huang K."/>
            <person name="Zucker J."/>
            <person name="Coleman M.L."/>
            <person name="Rodrigue S."/>
            <person name="Chen F."/>
            <person name="Lapidus A."/>
            <person name="Ferriera S."/>
            <person name="Johnson J."/>
            <person name="Steglich C."/>
            <person name="Church G.M."/>
            <person name="Richardson P."/>
            <person name="Chisholm S.W."/>
        </authorList>
    </citation>
    <scope>NUCLEOTIDE SEQUENCE [LARGE SCALE GENOMIC DNA]</scope>
    <source>
        <strain>MIT 9515</strain>
    </source>
</reference>
<sequence>MSHAVKIYDTCIGCTQCVRACPLDVLEMVPWDGCKAGQIASSPRTEDCVGCKRCETACPTDFLSIRVYLGDETSRSMGLAY</sequence>
<feature type="initiator methionine" description="Removed" evidence="1">
    <location>
        <position position="1"/>
    </location>
</feature>
<feature type="chain" id="PRO_0000292101" description="Photosystem I iron-sulfur center">
    <location>
        <begin position="2"/>
        <end position="81"/>
    </location>
</feature>
<feature type="domain" description="4Fe-4S ferredoxin-type 1" evidence="2">
    <location>
        <begin position="2"/>
        <end position="31"/>
    </location>
</feature>
<feature type="domain" description="4Fe-4S ferredoxin-type 2" evidence="2">
    <location>
        <begin position="37"/>
        <end position="68"/>
    </location>
</feature>
<feature type="binding site" evidence="2">
    <location>
        <position position="11"/>
    </location>
    <ligand>
        <name>[4Fe-4S] cluster</name>
        <dbReference type="ChEBI" id="CHEBI:49883"/>
        <label>1</label>
    </ligand>
</feature>
<feature type="binding site" evidence="2">
    <location>
        <position position="14"/>
    </location>
    <ligand>
        <name>[4Fe-4S] cluster</name>
        <dbReference type="ChEBI" id="CHEBI:49883"/>
        <label>1</label>
    </ligand>
</feature>
<feature type="binding site" evidence="2">
    <location>
        <position position="17"/>
    </location>
    <ligand>
        <name>[4Fe-4S] cluster</name>
        <dbReference type="ChEBI" id="CHEBI:49883"/>
        <label>1</label>
    </ligand>
</feature>
<feature type="binding site" evidence="2">
    <location>
        <position position="21"/>
    </location>
    <ligand>
        <name>[4Fe-4S] cluster</name>
        <dbReference type="ChEBI" id="CHEBI:49883"/>
        <label>2</label>
    </ligand>
</feature>
<feature type="binding site" evidence="2">
    <location>
        <position position="48"/>
    </location>
    <ligand>
        <name>[4Fe-4S] cluster</name>
        <dbReference type="ChEBI" id="CHEBI:49883"/>
        <label>2</label>
    </ligand>
</feature>
<feature type="binding site" evidence="2">
    <location>
        <position position="51"/>
    </location>
    <ligand>
        <name>[4Fe-4S] cluster</name>
        <dbReference type="ChEBI" id="CHEBI:49883"/>
        <label>2</label>
    </ligand>
</feature>
<feature type="binding site" evidence="2">
    <location>
        <position position="54"/>
    </location>
    <ligand>
        <name>[4Fe-4S] cluster</name>
        <dbReference type="ChEBI" id="CHEBI:49883"/>
        <label>2</label>
    </ligand>
</feature>
<feature type="binding site" evidence="2">
    <location>
        <position position="58"/>
    </location>
    <ligand>
        <name>[4Fe-4S] cluster</name>
        <dbReference type="ChEBI" id="CHEBI:49883"/>
        <label>1</label>
    </ligand>
</feature>
<comment type="function">
    <text evidence="2">Apoprotein for the two 4Fe-4S centers FA and FB of photosystem I (PSI); essential for photochemical activity. FB is the terminal electron acceptor of PSI, donating electrons to ferredoxin. The C-terminus interacts with PsaA/B/D and helps assemble the protein into the PSI complex. Required for binding of PsaD and PsaE to PSI. PSI is a plastocyanin/cytochrome c6-ferredoxin oxidoreductase, converting photonic excitation into a charge separation, which transfers an electron from the donor P700 chlorophyll pair to the spectroscopically characterized acceptors A0, A1, FX, FA and FB in turn.</text>
</comment>
<comment type="catalytic activity">
    <reaction evidence="2">
        <text>reduced [plastocyanin] + hnu + oxidized [2Fe-2S]-[ferredoxin] = oxidized [plastocyanin] + reduced [2Fe-2S]-[ferredoxin]</text>
        <dbReference type="Rhea" id="RHEA:30407"/>
        <dbReference type="Rhea" id="RHEA-COMP:10000"/>
        <dbReference type="Rhea" id="RHEA-COMP:10001"/>
        <dbReference type="Rhea" id="RHEA-COMP:10039"/>
        <dbReference type="Rhea" id="RHEA-COMP:10040"/>
        <dbReference type="ChEBI" id="CHEBI:29036"/>
        <dbReference type="ChEBI" id="CHEBI:30212"/>
        <dbReference type="ChEBI" id="CHEBI:33737"/>
        <dbReference type="ChEBI" id="CHEBI:33738"/>
        <dbReference type="ChEBI" id="CHEBI:49552"/>
        <dbReference type="EC" id="1.97.1.12"/>
    </reaction>
</comment>
<comment type="cofactor">
    <cofactor evidence="2">
        <name>[4Fe-4S] cluster</name>
        <dbReference type="ChEBI" id="CHEBI:49883"/>
    </cofactor>
    <text evidence="2">Binds 2 [4Fe-4S] clusters. Cluster 2 is most probably the spectroscopically characterized electron acceptor FA and cluster 1 is most probably FB.</text>
</comment>
<comment type="subunit">
    <text evidence="2">The cyanobacterial PSI reaction center is composed of one copy each of PsaA,B,C,D,E,F,I,J,K,L,M and X, and forms trimeric complexes.</text>
</comment>
<comment type="subcellular location">
    <subcellularLocation>
        <location evidence="2">Cellular thylakoid membrane</location>
        <topology evidence="2">Peripheral membrane protein</topology>
        <orientation evidence="2">Cytoplasmic side</orientation>
    </subcellularLocation>
</comment>